<sequence length="508" mass="57857">MGGLTLFAAQGCKAPKQVAEQAEHPNIIYVFPDQYRNQAMGFWNQEGFRDKVNFRGDPVHTPNIDTFARESMVLTSAQSNCPLSSPHRGMLLTGMYPNRSGVPLNCNSTRPISSLRDDAECIGDVFSKAGYDCAYFGKLHADFPTPNDPENPGQYVETQRPVWDAYTPKEQRHGFNYWYSYGTFDEHKNPHYWDTDGKRHDPKEWSPLHESGKVVSYLKNEGNVRDTKKPFFIMVGMNPPHSPYRSLNDCEEQDFNLYKDQPLDSLLIRPNVDLNMKKAESVRYYFASVTGVDRAFGQILEALKQLGLDKNTVVIFASDHGETMCSQRTDDPKNSPYSESMNIPFLVRFPGKIQPRVDDLLLSAPDIMPTVLGLCGLGDSIPSEVQGRNFAPLFFDEKAEIVRPAGALYIQNLDGEKDKDGLVQSYFPSSRGIKTARYTLALYIDRKTKQLKKSLLFDDVNDPYQLNNLPLDENKEVVEQLYREMGTMLKEIDDPWYTEKILSDRIPY</sequence>
<evidence type="ECO:0000250" key="1">
    <source>
        <dbReference type="UniProtKB" id="Q9X759"/>
    </source>
</evidence>
<evidence type="ECO:0000269" key="2">
    <source>
    </source>
</evidence>
<evidence type="ECO:0000303" key="3">
    <source>
    </source>
</evidence>
<evidence type="ECO:0000305" key="4"/>
<evidence type="ECO:0000305" key="5">
    <source>
    </source>
</evidence>
<evidence type="ECO:0000312" key="6">
    <source>
        <dbReference type="EMBL" id="AAO78455.1"/>
    </source>
</evidence>
<evidence type="ECO:0007829" key="7">
    <source>
        <dbReference type="PDB" id="6S21"/>
    </source>
</evidence>
<accession>Q8A2F6</accession>
<protein>
    <recommendedName>
        <fullName evidence="3">Endo-4-O-sulfatase</fullName>
        <ecNumber evidence="2">3.1.6.-</ecNumber>
    </recommendedName>
</protein>
<proteinExistence type="evidence at protein level"/>
<dbReference type="EC" id="3.1.6.-" evidence="2"/>
<dbReference type="EMBL" id="AE015928">
    <property type="protein sequence ID" value="AAO78455.1"/>
    <property type="molecule type" value="Genomic_DNA"/>
</dbReference>
<dbReference type="RefSeq" id="NP_812261.1">
    <property type="nucleotide sequence ID" value="NC_004663.1"/>
</dbReference>
<dbReference type="PDB" id="6S21">
    <property type="method" value="X-ray"/>
    <property type="resolution" value="2.80 A"/>
    <property type="chains" value="A/B/C=17-508"/>
</dbReference>
<dbReference type="PDBsum" id="6S21"/>
<dbReference type="SMR" id="Q8A2F6"/>
<dbReference type="STRING" id="226186.BT_3349"/>
<dbReference type="PaxDb" id="226186-BT_3349"/>
<dbReference type="EnsemblBacteria" id="AAO78455">
    <property type="protein sequence ID" value="AAO78455"/>
    <property type="gene ID" value="BT_3349"/>
</dbReference>
<dbReference type="KEGG" id="bth:BT_3349"/>
<dbReference type="PATRIC" id="fig|226186.12.peg.3417"/>
<dbReference type="eggNOG" id="COG3119">
    <property type="taxonomic scope" value="Bacteria"/>
</dbReference>
<dbReference type="HOGENOM" id="CLU_006332_9_3_10"/>
<dbReference type="InParanoid" id="Q8A2F6"/>
<dbReference type="OrthoDB" id="9789742at2"/>
<dbReference type="Proteomes" id="UP000001414">
    <property type="component" value="Chromosome"/>
</dbReference>
<dbReference type="GO" id="GO:0004065">
    <property type="term" value="F:arylsulfatase activity"/>
    <property type="evidence" value="ECO:0000318"/>
    <property type="project" value="GO_Central"/>
</dbReference>
<dbReference type="CDD" id="cd16034">
    <property type="entry name" value="sulfatase_like"/>
    <property type="match status" value="1"/>
</dbReference>
<dbReference type="FunFam" id="3.40.720.10:FF:000059">
    <property type="entry name" value="Arylsulfatase"/>
    <property type="match status" value="1"/>
</dbReference>
<dbReference type="Gene3D" id="3.30.1120.10">
    <property type="match status" value="1"/>
</dbReference>
<dbReference type="Gene3D" id="3.40.720.10">
    <property type="entry name" value="Alkaline Phosphatase, subunit A"/>
    <property type="match status" value="1"/>
</dbReference>
<dbReference type="InterPro" id="IPR017850">
    <property type="entry name" value="Alkaline_phosphatase_core_sf"/>
</dbReference>
<dbReference type="InterPro" id="IPR050738">
    <property type="entry name" value="Sulfatase"/>
</dbReference>
<dbReference type="InterPro" id="IPR000917">
    <property type="entry name" value="Sulfatase_N"/>
</dbReference>
<dbReference type="PANTHER" id="PTHR42693">
    <property type="entry name" value="ARYLSULFATASE FAMILY MEMBER"/>
    <property type="match status" value="1"/>
</dbReference>
<dbReference type="PANTHER" id="PTHR42693:SF53">
    <property type="entry name" value="ENDO-4-O-SULFATASE"/>
    <property type="match status" value="1"/>
</dbReference>
<dbReference type="Pfam" id="PF00884">
    <property type="entry name" value="Sulfatase"/>
    <property type="match status" value="1"/>
</dbReference>
<dbReference type="SUPFAM" id="SSF53649">
    <property type="entry name" value="Alkaline phosphatase-like"/>
    <property type="match status" value="1"/>
</dbReference>
<keyword id="KW-0002">3D-structure</keyword>
<keyword id="KW-0378">Hydrolase</keyword>
<keyword id="KW-1185">Reference proteome</keyword>
<reference key="1">
    <citation type="journal article" date="2003" name="Science">
        <title>A genomic view of the human-Bacteroides thetaiotaomicron symbiosis.</title>
        <authorList>
            <person name="Xu J."/>
            <person name="Bjursell M.K."/>
            <person name="Himrod J."/>
            <person name="Deng S."/>
            <person name="Carmichael L.K."/>
            <person name="Chiang H.C."/>
            <person name="Hooper L.V."/>
            <person name="Gordon J.I."/>
        </authorList>
    </citation>
    <scope>NUCLEOTIDE SEQUENCE [LARGE SCALE GENOMIC DNA]</scope>
    <source>
        <strain>ATCC 29148 / DSM 2079 / JCM 5827 / CCUG 10774 / NCTC 10582 / VPI-5482 / E50</strain>
    </source>
</reference>
<reference key="2">
    <citation type="journal article" date="2009" name="Proc. Natl. Acad. Sci. U.S.A.">
        <title>Characterizing a model human gut microbiota composed of members of its two dominant bacterial phyla.</title>
        <authorList>
            <person name="Mahowald M.A."/>
            <person name="Rey F.E."/>
            <person name="Seedorf H."/>
            <person name="Turnbaugh P.J."/>
            <person name="Fulton R.S."/>
            <person name="Wollam A."/>
            <person name="Shah N."/>
            <person name="Wang C."/>
            <person name="Magrini V."/>
            <person name="Wilson R.K."/>
            <person name="Cantarel B.L."/>
            <person name="Coutinho P.M."/>
            <person name="Henrissat B."/>
            <person name="Crock L.W."/>
            <person name="Russell A."/>
            <person name="Verberkmoes N.C."/>
            <person name="Hettich R.L."/>
            <person name="Gordon J.I."/>
        </authorList>
    </citation>
    <scope>NUCLEOTIDE SEQUENCE [LARGE SCALE GENOMIC DNA]</scope>
    <source>
        <strain>ATCC 29148 / DSM 2079 / JCM 5827 / CCUG 10774 / NCTC 10582 / VPI-5482 / E50</strain>
    </source>
</reference>
<reference key="3">
    <citation type="journal article" date="2014" name="J. Biol. Chem.">
        <title>Characterization of glycosaminoglycan (GAG) sulfatases from the human gut symbiont Bacteroides thetaiotaomicron reveals the first GAG-specific bacterial endosulfatase.</title>
        <authorList>
            <person name="Ulmer J.E."/>
            <person name="Vilen E.M."/>
            <person name="Namburi R.B."/>
            <person name="Benjdia A."/>
            <person name="Beneteau J."/>
            <person name="Malleron A."/>
            <person name="Bonnaffe D."/>
            <person name="Driguez P.A."/>
            <person name="Descroix K."/>
            <person name="Lassalle G."/>
            <person name="Le Narvor C."/>
            <person name="Sandstroem C."/>
            <person name="Spillmann D."/>
            <person name="Berteau O."/>
        </authorList>
    </citation>
    <scope>FUNCTION</scope>
    <scope>CATALYTIC ACTIVITY</scope>
</reference>
<organism>
    <name type="scientific">Bacteroides thetaiotaomicron (strain ATCC 29148 / DSM 2079 / JCM 5827 / CCUG 10774 / NCTC 10582 / VPI-5482 / E50)</name>
    <dbReference type="NCBI Taxonomy" id="226186"/>
    <lineage>
        <taxon>Bacteria</taxon>
        <taxon>Pseudomonadati</taxon>
        <taxon>Bacteroidota</taxon>
        <taxon>Bacteroidia</taxon>
        <taxon>Bacteroidales</taxon>
        <taxon>Bacteroidaceae</taxon>
        <taxon>Bacteroides</taxon>
    </lineage>
</organism>
<name>ENDSF_BACTN</name>
<comment type="function">
    <text evidence="2 5">Endosulfatase involved in the degradation of the glycosaminoglycans (GAGs) chondroitin sulfate (CS) and dermatan sulfate (DS). Efficiently hydrolyzes sulfate groups from a broad range of substrate size, including disaccharide to high molecular weight CS and DS polymers. Has a strict specificity for the 4-O-sulfate groups of galactosamine (PubMed:25002587). GAG-specific sulfatases play a key role in the persistence of the major human gut symbiont B.thetaiotaomicron in the host gastrointestinal tract (PubMed:25002587).</text>
</comment>
<comment type="PTM">
    <text evidence="1">The conversion to 3-oxoalanine (also known as C-formylglycine, FGly), of a serine or cysteine residue in prokaryotes and of a cysteine residue in eukaryotes, is critical for catalytic activity.</text>
</comment>
<comment type="similarity">
    <text evidence="4">Belongs to the sulfatase family.</text>
</comment>
<feature type="chain" id="PRO_0000446228" description="Endo-4-O-sulfatase">
    <location>
        <begin position="1"/>
        <end position="508"/>
    </location>
</feature>
<feature type="modified residue" description="3-oxoalanine (Ser)" evidence="1">
    <location>
        <position position="84"/>
    </location>
</feature>
<feature type="strand" evidence="7">
    <location>
        <begin position="26"/>
        <end position="30"/>
    </location>
</feature>
<feature type="helix" evidence="7">
    <location>
        <begin position="41"/>
        <end position="44"/>
    </location>
</feature>
<feature type="helix" evidence="7">
    <location>
        <begin position="48"/>
        <end position="50"/>
    </location>
</feature>
<feature type="helix" evidence="7">
    <location>
        <begin position="62"/>
        <end position="68"/>
    </location>
</feature>
<feature type="strand" evidence="7">
    <location>
        <begin position="71"/>
        <end position="75"/>
    </location>
</feature>
<feature type="helix" evidence="7">
    <location>
        <begin position="84"/>
        <end position="93"/>
    </location>
</feature>
<feature type="helix" evidence="7">
    <location>
        <begin position="97"/>
        <end position="100"/>
    </location>
</feature>
<feature type="helix" evidence="7">
    <location>
        <begin position="122"/>
        <end position="128"/>
    </location>
</feature>
<feature type="strand" evidence="7">
    <location>
        <begin position="132"/>
        <end position="138"/>
    </location>
</feature>
<feature type="helix" evidence="7">
    <location>
        <begin position="169"/>
        <end position="171"/>
    </location>
</feature>
<feature type="strand" evidence="7">
    <location>
        <begin position="176"/>
        <end position="182"/>
    </location>
</feature>
<feature type="strand" evidence="7">
    <location>
        <begin position="187"/>
        <end position="189"/>
    </location>
</feature>
<feature type="strand" evidence="7">
    <location>
        <begin position="192"/>
        <end position="194"/>
    </location>
</feature>
<feature type="helix" evidence="7">
    <location>
        <begin position="206"/>
        <end position="219"/>
    </location>
</feature>
<feature type="turn" evidence="7">
    <location>
        <begin position="220"/>
        <end position="222"/>
    </location>
</feature>
<feature type="strand" evidence="7">
    <location>
        <begin position="231"/>
        <end position="236"/>
    </location>
</feature>
<feature type="helix" evidence="7">
    <location>
        <begin position="247"/>
        <end position="249"/>
    </location>
</feature>
<feature type="helix" evidence="7">
    <location>
        <begin position="252"/>
        <end position="255"/>
    </location>
</feature>
<feature type="turn" evidence="7">
    <location>
        <begin position="256"/>
        <end position="260"/>
    </location>
</feature>
<feature type="helix" evidence="7">
    <location>
        <begin position="263"/>
        <end position="265"/>
    </location>
</feature>
<feature type="helix" evidence="7">
    <location>
        <begin position="277"/>
        <end position="281"/>
    </location>
</feature>
<feature type="helix" evidence="7">
    <location>
        <begin position="282"/>
        <end position="305"/>
    </location>
</feature>
<feature type="helix" evidence="7">
    <location>
        <begin position="308"/>
        <end position="310"/>
    </location>
</feature>
<feature type="strand" evidence="7">
    <location>
        <begin position="311"/>
        <end position="317"/>
    </location>
</feature>
<feature type="strand" evidence="7">
    <location>
        <begin position="331"/>
        <end position="335"/>
    </location>
</feature>
<feature type="helix" evidence="7">
    <location>
        <begin position="338"/>
        <end position="341"/>
    </location>
</feature>
<feature type="strand" evidence="7">
    <location>
        <begin position="345"/>
        <end position="348"/>
    </location>
</feature>
<feature type="turn" evidence="7">
    <location>
        <begin position="350"/>
        <end position="352"/>
    </location>
</feature>
<feature type="strand" evidence="7">
    <location>
        <begin position="356"/>
        <end position="358"/>
    </location>
</feature>
<feature type="helix" evidence="7">
    <location>
        <begin position="364"/>
        <end position="366"/>
    </location>
</feature>
<feature type="helix" evidence="7">
    <location>
        <begin position="367"/>
        <end position="374"/>
    </location>
</feature>
<feature type="helix" evidence="7">
    <location>
        <begin position="378"/>
        <end position="380"/>
    </location>
</feature>
<feature type="helix" evidence="7">
    <location>
        <begin position="391"/>
        <end position="395"/>
    </location>
</feature>
<feature type="strand" evidence="7">
    <location>
        <begin position="405"/>
        <end position="414"/>
    </location>
</feature>
<feature type="strand" evidence="7">
    <location>
        <begin position="425"/>
        <end position="444"/>
    </location>
</feature>
<feature type="strand" evidence="7">
    <location>
        <begin position="446"/>
        <end position="448"/>
    </location>
</feature>
<feature type="strand" evidence="7">
    <location>
        <begin position="451"/>
        <end position="458"/>
    </location>
</feature>
<feature type="turn" evidence="7">
    <location>
        <begin position="459"/>
        <end position="461"/>
    </location>
</feature>
<feature type="helix" evidence="7">
    <location>
        <begin position="472"/>
        <end position="474"/>
    </location>
</feature>
<feature type="helix" evidence="7">
    <location>
        <begin position="475"/>
        <end position="492"/>
    </location>
</feature>
<feature type="helix" evidence="7">
    <location>
        <begin position="495"/>
        <end position="498"/>
    </location>
</feature>
<feature type="turn" evidence="7">
    <location>
        <begin position="499"/>
        <end position="505"/>
    </location>
</feature>
<gene>
    <name evidence="6" type="ordered locus">BT_3349</name>
</gene>